<proteinExistence type="inferred from homology"/>
<reference key="1">
    <citation type="journal article" date="2007" name="J. Bacteriol.">
        <title>Whole-genome analysis of the methyl tert-butyl ether-degrading beta-proteobacterium Methylibium petroleiphilum PM1.</title>
        <authorList>
            <person name="Kane S.R."/>
            <person name="Chakicherla A.Y."/>
            <person name="Chain P.S.G."/>
            <person name="Schmidt R."/>
            <person name="Shin M.W."/>
            <person name="Legler T.C."/>
            <person name="Scow K.M."/>
            <person name="Larimer F.W."/>
            <person name="Lucas S.M."/>
            <person name="Richardson P.M."/>
            <person name="Hristova K.R."/>
        </authorList>
    </citation>
    <scope>NUCLEOTIDE SEQUENCE [LARGE SCALE GENOMIC DNA]</scope>
    <source>
        <strain>ATCC BAA-1232 / LMG 22953 / PM1</strain>
    </source>
</reference>
<comment type="function">
    <text evidence="1">Catalyzes the transfer of a ribosyl phosphate group from 5-phosphoribose 1-diphosphate to orotate, leading to the formation of orotidine monophosphate (OMP).</text>
</comment>
<comment type="catalytic activity">
    <reaction evidence="1">
        <text>orotidine 5'-phosphate + diphosphate = orotate + 5-phospho-alpha-D-ribose 1-diphosphate</text>
        <dbReference type="Rhea" id="RHEA:10380"/>
        <dbReference type="ChEBI" id="CHEBI:30839"/>
        <dbReference type="ChEBI" id="CHEBI:33019"/>
        <dbReference type="ChEBI" id="CHEBI:57538"/>
        <dbReference type="ChEBI" id="CHEBI:58017"/>
        <dbReference type="EC" id="2.4.2.10"/>
    </reaction>
</comment>
<comment type="cofactor">
    <cofactor evidence="1">
        <name>Mg(2+)</name>
        <dbReference type="ChEBI" id="CHEBI:18420"/>
    </cofactor>
</comment>
<comment type="pathway">
    <text evidence="1">Pyrimidine metabolism; UMP biosynthesis via de novo pathway; UMP from orotate: step 1/2.</text>
</comment>
<comment type="subunit">
    <text evidence="1">Homodimer.</text>
</comment>
<comment type="similarity">
    <text evidence="1">Belongs to the purine/pyrimidine phosphoribosyltransferase family. PyrE subfamily.</text>
</comment>
<sequence length="234" mass="25085">MSTFGGPGTAARDDLAQDFVAFAVEAGVLRFGEFKTKAGRLSPYFFNAGLFDDGAKLGRLAEFYARRMQASGLAFDMIFGPAYKGITLAAAVAIELARLGRNLPYAYNRKETKDHGEGGSLVGAKLHGRVVIIDDVISAGTSVRESVAMIRAAGAEPCGVAIALDRQERATETTQDGVRDADHSAVQFVQRELGLAVCAIATLSDLLQYLARQADPALAQHLPRVQAYRDRYGV</sequence>
<accession>A2SBW1</accession>
<feature type="chain" id="PRO_1000138806" description="Orotate phosphoribosyltransferase">
    <location>
        <begin position="1"/>
        <end position="234"/>
    </location>
</feature>
<feature type="binding site" description="in other chain" evidence="1">
    <location>
        <position position="37"/>
    </location>
    <ligand>
        <name>5-phospho-alpha-D-ribose 1-diphosphate</name>
        <dbReference type="ChEBI" id="CHEBI:58017"/>
        <note>ligand shared between dimeric partners</note>
    </ligand>
</feature>
<feature type="binding site" evidence="1">
    <location>
        <begin position="45"/>
        <end position="46"/>
    </location>
    <ligand>
        <name>orotate</name>
        <dbReference type="ChEBI" id="CHEBI:30839"/>
    </ligand>
</feature>
<feature type="binding site" description="in other chain" evidence="1">
    <location>
        <begin position="83"/>
        <end position="84"/>
    </location>
    <ligand>
        <name>5-phospho-alpha-D-ribose 1-diphosphate</name>
        <dbReference type="ChEBI" id="CHEBI:58017"/>
        <note>ligand shared between dimeric partners</note>
    </ligand>
</feature>
<feature type="binding site" evidence="1">
    <location>
        <position position="109"/>
    </location>
    <ligand>
        <name>5-phospho-alpha-D-ribose 1-diphosphate</name>
        <dbReference type="ChEBI" id="CHEBI:58017"/>
        <note>ligand shared between dimeric partners</note>
    </ligand>
</feature>
<feature type="binding site" description="in other chain" evidence="1">
    <location>
        <position position="110"/>
    </location>
    <ligand>
        <name>5-phospho-alpha-D-ribose 1-diphosphate</name>
        <dbReference type="ChEBI" id="CHEBI:58017"/>
        <note>ligand shared between dimeric partners</note>
    </ligand>
</feature>
<feature type="binding site" evidence="1">
    <location>
        <position position="113"/>
    </location>
    <ligand>
        <name>5-phospho-alpha-D-ribose 1-diphosphate</name>
        <dbReference type="ChEBI" id="CHEBI:58017"/>
        <note>ligand shared between dimeric partners</note>
    </ligand>
</feature>
<feature type="binding site" evidence="1">
    <location>
        <position position="115"/>
    </location>
    <ligand>
        <name>5-phospho-alpha-D-ribose 1-diphosphate</name>
        <dbReference type="ChEBI" id="CHEBI:58017"/>
        <note>ligand shared between dimeric partners</note>
    </ligand>
</feature>
<feature type="binding site" description="in other chain" evidence="1">
    <location>
        <begin position="134"/>
        <end position="142"/>
    </location>
    <ligand>
        <name>5-phospho-alpha-D-ribose 1-diphosphate</name>
        <dbReference type="ChEBI" id="CHEBI:58017"/>
        <note>ligand shared between dimeric partners</note>
    </ligand>
</feature>
<feature type="binding site" evidence="1">
    <location>
        <position position="138"/>
    </location>
    <ligand>
        <name>orotate</name>
        <dbReference type="ChEBI" id="CHEBI:30839"/>
    </ligand>
</feature>
<feature type="binding site" evidence="1">
    <location>
        <position position="166"/>
    </location>
    <ligand>
        <name>orotate</name>
        <dbReference type="ChEBI" id="CHEBI:30839"/>
    </ligand>
</feature>
<gene>
    <name evidence="1" type="primary">pyrE</name>
    <name type="ordered locus">Mpe_A0088</name>
</gene>
<name>PYRE_METPP</name>
<keyword id="KW-0328">Glycosyltransferase</keyword>
<keyword id="KW-0460">Magnesium</keyword>
<keyword id="KW-0665">Pyrimidine biosynthesis</keyword>
<keyword id="KW-1185">Reference proteome</keyword>
<keyword id="KW-0808">Transferase</keyword>
<protein>
    <recommendedName>
        <fullName evidence="1">Orotate phosphoribosyltransferase</fullName>
        <shortName evidence="1">OPRT</shortName>
        <shortName evidence="1">OPRTase</shortName>
        <ecNumber evidence="1">2.4.2.10</ecNumber>
    </recommendedName>
</protein>
<organism>
    <name type="scientific">Methylibium petroleiphilum (strain ATCC BAA-1232 / LMG 22953 / PM1)</name>
    <dbReference type="NCBI Taxonomy" id="420662"/>
    <lineage>
        <taxon>Bacteria</taxon>
        <taxon>Pseudomonadati</taxon>
        <taxon>Pseudomonadota</taxon>
        <taxon>Betaproteobacteria</taxon>
        <taxon>Burkholderiales</taxon>
        <taxon>Sphaerotilaceae</taxon>
        <taxon>Methylibium</taxon>
    </lineage>
</organism>
<dbReference type="EC" id="2.4.2.10" evidence="1"/>
<dbReference type="EMBL" id="CP000555">
    <property type="protein sequence ID" value="ABM93050.1"/>
    <property type="molecule type" value="Genomic_DNA"/>
</dbReference>
<dbReference type="RefSeq" id="WP_011827689.1">
    <property type="nucleotide sequence ID" value="NC_008825.1"/>
</dbReference>
<dbReference type="SMR" id="A2SBW1"/>
<dbReference type="STRING" id="420662.Mpe_A0088"/>
<dbReference type="KEGG" id="mpt:Mpe_A0088"/>
<dbReference type="eggNOG" id="COG0461">
    <property type="taxonomic scope" value="Bacteria"/>
</dbReference>
<dbReference type="HOGENOM" id="CLU_074878_0_1_4"/>
<dbReference type="UniPathway" id="UPA00070">
    <property type="reaction ID" value="UER00119"/>
</dbReference>
<dbReference type="Proteomes" id="UP000000366">
    <property type="component" value="Chromosome"/>
</dbReference>
<dbReference type="GO" id="GO:0005737">
    <property type="term" value="C:cytoplasm"/>
    <property type="evidence" value="ECO:0007669"/>
    <property type="project" value="TreeGrafter"/>
</dbReference>
<dbReference type="GO" id="GO:0000287">
    <property type="term" value="F:magnesium ion binding"/>
    <property type="evidence" value="ECO:0007669"/>
    <property type="project" value="UniProtKB-UniRule"/>
</dbReference>
<dbReference type="GO" id="GO:0004588">
    <property type="term" value="F:orotate phosphoribosyltransferase activity"/>
    <property type="evidence" value="ECO:0007669"/>
    <property type="project" value="UniProtKB-UniRule"/>
</dbReference>
<dbReference type="GO" id="GO:0006207">
    <property type="term" value="P:'de novo' pyrimidine nucleobase biosynthetic process"/>
    <property type="evidence" value="ECO:0007669"/>
    <property type="project" value="TreeGrafter"/>
</dbReference>
<dbReference type="GO" id="GO:0044205">
    <property type="term" value="P:'de novo' UMP biosynthetic process"/>
    <property type="evidence" value="ECO:0007669"/>
    <property type="project" value="UniProtKB-UniRule"/>
</dbReference>
<dbReference type="GO" id="GO:0046132">
    <property type="term" value="P:pyrimidine ribonucleoside biosynthetic process"/>
    <property type="evidence" value="ECO:0007669"/>
    <property type="project" value="TreeGrafter"/>
</dbReference>
<dbReference type="CDD" id="cd06223">
    <property type="entry name" value="PRTases_typeI"/>
    <property type="match status" value="1"/>
</dbReference>
<dbReference type="FunFam" id="3.40.50.2020:FF:000008">
    <property type="entry name" value="Orotate phosphoribosyltransferase"/>
    <property type="match status" value="1"/>
</dbReference>
<dbReference type="Gene3D" id="3.40.50.2020">
    <property type="match status" value="1"/>
</dbReference>
<dbReference type="HAMAP" id="MF_01208">
    <property type="entry name" value="PyrE"/>
    <property type="match status" value="1"/>
</dbReference>
<dbReference type="InterPro" id="IPR023031">
    <property type="entry name" value="OPRT"/>
</dbReference>
<dbReference type="InterPro" id="IPR004467">
    <property type="entry name" value="Or_phspho_trans_dom"/>
</dbReference>
<dbReference type="InterPro" id="IPR000836">
    <property type="entry name" value="PRibTrfase_dom"/>
</dbReference>
<dbReference type="InterPro" id="IPR029057">
    <property type="entry name" value="PRTase-like"/>
</dbReference>
<dbReference type="NCBIfam" id="TIGR00336">
    <property type="entry name" value="pyrE"/>
    <property type="match status" value="1"/>
</dbReference>
<dbReference type="PANTHER" id="PTHR46683">
    <property type="entry name" value="OROTATE PHOSPHORIBOSYLTRANSFERASE 1-RELATED"/>
    <property type="match status" value="1"/>
</dbReference>
<dbReference type="PANTHER" id="PTHR46683:SF1">
    <property type="entry name" value="OROTATE PHOSPHORIBOSYLTRANSFERASE 1-RELATED"/>
    <property type="match status" value="1"/>
</dbReference>
<dbReference type="Pfam" id="PF00156">
    <property type="entry name" value="Pribosyltran"/>
    <property type="match status" value="1"/>
</dbReference>
<dbReference type="SUPFAM" id="SSF53271">
    <property type="entry name" value="PRTase-like"/>
    <property type="match status" value="1"/>
</dbReference>
<dbReference type="PROSITE" id="PS00103">
    <property type="entry name" value="PUR_PYR_PR_TRANSFER"/>
    <property type="match status" value="1"/>
</dbReference>
<evidence type="ECO:0000255" key="1">
    <source>
        <dbReference type="HAMAP-Rule" id="MF_01208"/>
    </source>
</evidence>